<comment type="function">
    <text evidence="1">The heterodimer acts as both an ATP-dependent DNA helicase and an ATP-dependent, dual-direction single-stranded exonuclease. Recognizes the chi site generating a DNA molecule suitable for the initiation of homologous recombination. The AddA nuclease domain is required for chi fragment generation; this subunit has the helicase and 3' -&gt; 5' nuclease activities.</text>
</comment>
<comment type="catalytic activity">
    <reaction evidence="1">
        <text>Couples ATP hydrolysis with the unwinding of duplex DNA by translocating in the 3'-5' direction.</text>
        <dbReference type="EC" id="5.6.2.4"/>
    </reaction>
</comment>
<comment type="catalytic activity">
    <reaction evidence="1">
        <text>ATP + H2O = ADP + phosphate + H(+)</text>
        <dbReference type="Rhea" id="RHEA:13065"/>
        <dbReference type="ChEBI" id="CHEBI:15377"/>
        <dbReference type="ChEBI" id="CHEBI:15378"/>
        <dbReference type="ChEBI" id="CHEBI:30616"/>
        <dbReference type="ChEBI" id="CHEBI:43474"/>
        <dbReference type="ChEBI" id="CHEBI:456216"/>
        <dbReference type="EC" id="5.6.2.4"/>
    </reaction>
</comment>
<comment type="cofactor">
    <cofactor evidence="1">
        <name>Mg(2+)</name>
        <dbReference type="ChEBI" id="CHEBI:18420"/>
    </cofactor>
</comment>
<comment type="subunit">
    <text evidence="1">Heterodimer of AddA and AddB/RexB.</text>
</comment>
<comment type="similarity">
    <text evidence="1">Belongs to the helicase family. AddA subfamily.</text>
</comment>
<name>ADDA_STRA1</name>
<accession>Q3K1I4</accession>
<gene>
    <name evidence="1" type="primary">addA</name>
    <name type="synonym">rexA</name>
    <name type="ordered locus">SAK_0997</name>
</gene>
<sequence length="1207" mass="139446">MTFKPFLNPEDIAVIQTEEKNSDKKQKRTPEQIEAIYTFGNNVLVSASAGSGKTFVMVERILDKLLRGVPIDSLFISTFTVKAAGELKERLEKKINESLKSAESDDLKQFLTQQLVGIQTADIGTMDAFTQKIVNQYGYTLGISPIFRILQDKNEQDVIKNEVYADLFSDYMTGKNAASFIKLVKNFSGNRKDSKAFREMVYKVYAFSQSTDNPKRWMQTVFLKGAQTYTDFEAIPDQEVSSLLNVMQTTANQLRDLTDQEDYKQLTAKGVPTANYKKHLKIIENLVHWSQDFNLLYGKKGLTNLARDITNVIPSGNDVTVAGVKYPIFKQLHNRIVGLKHLEVIFKYQGESLFLLELLQSFVLDFSEQYLQEKIQENAFEFSDIAHFAIQILEENHDIRQLYQDKYHEVMVDEYQDNNHTQERMLELLSNGHNRFMVGDIKQSIYRFRQADPQIFNDKYKAYQDNPSQGKLIILKENFRSQSEVLDSTNSVFTHLMDEEVGDILYDESHQLKAGSPRQQERHPNNKTQVLLLDTDEDDIDDSDSQQYDISPAEAKLVAKEIIRLHKEENVPFQDITLLVSSRTRNDGILQTFDRYGIPLVTDGGEQNYLKSVEVMVMLDTLRSIDNPLNDYALVALLRSPMFGFNEDDLTRIAIQDVKMAFYHKVKLSYHKEGHHSDLITPELSSKIDHFMKTFQTWRDFAKWHSLYDLIWKIYNDRFYYDYVGALPKAEQRQANLYALALRANQFEKTGFKGLSRFIRMIDKVLENENDLADVEVALPQNAVNLMTIHKSKGLEFKYVFILNIDKKFSMVDITSPLILSRNQGIGIKYVADMRHELEEEILPAVKVSMETLPYQLNKRELRLATLSEQMRLLYVAMTRAEKKLYLVGKASQTKWADHYDLVSENNHLPLASRETFVTFQDWLLAVHETYKKQELFYDINFVSLEELTDHHIGMVNPSLPFNPDNKVENRQSEDIVRAISVLESVEQINQTYKAAIELPTVRTPSQVKKFYEPILDIEGVDVMETITKTSVDFKLPDFSTSKKQDPAALGSAVHELMQRIEMSSHVKMEDIQKALTEVNAETSVKAAIQIEKINYFFQETSLGKYIQEEVEHLHREAPFAMLKEDPESGEKFVVRGIIDGYLLLENRIILFDYKTDKFVNPLELKERYQGQMALYAEALKKSYEIEKIDKYLILLGGKQLEVVKMD</sequence>
<feature type="chain" id="PRO_0000379326" description="ATP-dependent helicase/nuclease subunit A">
    <location>
        <begin position="1"/>
        <end position="1207"/>
    </location>
</feature>
<feature type="domain" description="UvrD-like helicase ATP-binding" evidence="1">
    <location>
        <begin position="26"/>
        <end position="482"/>
    </location>
</feature>
<feature type="domain" description="UvrD-like helicase C-terminal" evidence="1">
    <location>
        <begin position="508"/>
        <end position="794"/>
    </location>
</feature>
<feature type="binding site" evidence="1">
    <location>
        <begin position="47"/>
        <end position="54"/>
    </location>
    <ligand>
        <name>ATP</name>
        <dbReference type="ChEBI" id="CHEBI:30616"/>
    </ligand>
</feature>
<organism>
    <name type="scientific">Streptococcus agalactiae serotype Ia (strain ATCC 27591 / A909 / CDC SS700)</name>
    <dbReference type="NCBI Taxonomy" id="205921"/>
    <lineage>
        <taxon>Bacteria</taxon>
        <taxon>Bacillati</taxon>
        <taxon>Bacillota</taxon>
        <taxon>Bacilli</taxon>
        <taxon>Lactobacillales</taxon>
        <taxon>Streptococcaceae</taxon>
        <taxon>Streptococcus</taxon>
    </lineage>
</organism>
<keyword id="KW-0067">ATP-binding</keyword>
<keyword id="KW-0227">DNA damage</keyword>
<keyword id="KW-0234">DNA repair</keyword>
<keyword id="KW-0238">DNA-binding</keyword>
<keyword id="KW-0269">Exonuclease</keyword>
<keyword id="KW-0347">Helicase</keyword>
<keyword id="KW-0378">Hydrolase</keyword>
<keyword id="KW-0413">Isomerase</keyword>
<keyword id="KW-0540">Nuclease</keyword>
<keyword id="KW-0547">Nucleotide-binding</keyword>
<dbReference type="EC" id="3.1.-.-" evidence="1"/>
<dbReference type="EC" id="5.6.2.4" evidence="1"/>
<dbReference type="EMBL" id="CP000114">
    <property type="protein sequence ID" value="ABA45488.1"/>
    <property type="molecule type" value="Genomic_DNA"/>
</dbReference>
<dbReference type="RefSeq" id="WP_000143231.1">
    <property type="nucleotide sequence ID" value="NC_007432.1"/>
</dbReference>
<dbReference type="SMR" id="Q3K1I4"/>
<dbReference type="KEGG" id="sak:SAK_0997"/>
<dbReference type="HOGENOM" id="CLU_001114_3_1_9"/>
<dbReference type="GO" id="GO:0005829">
    <property type="term" value="C:cytosol"/>
    <property type="evidence" value="ECO:0007669"/>
    <property type="project" value="TreeGrafter"/>
</dbReference>
<dbReference type="GO" id="GO:0033202">
    <property type="term" value="C:DNA helicase complex"/>
    <property type="evidence" value="ECO:0007669"/>
    <property type="project" value="TreeGrafter"/>
</dbReference>
<dbReference type="GO" id="GO:0043138">
    <property type="term" value="F:3'-5' DNA helicase activity"/>
    <property type="evidence" value="ECO:0007669"/>
    <property type="project" value="UniProtKB-UniRule"/>
</dbReference>
<dbReference type="GO" id="GO:0008408">
    <property type="term" value="F:3'-5' exonuclease activity"/>
    <property type="evidence" value="ECO:0007669"/>
    <property type="project" value="UniProtKB-UniRule"/>
</dbReference>
<dbReference type="GO" id="GO:0005524">
    <property type="term" value="F:ATP binding"/>
    <property type="evidence" value="ECO:0007669"/>
    <property type="project" value="UniProtKB-UniRule"/>
</dbReference>
<dbReference type="GO" id="GO:0016887">
    <property type="term" value="F:ATP hydrolysis activity"/>
    <property type="evidence" value="ECO:0007669"/>
    <property type="project" value="RHEA"/>
</dbReference>
<dbReference type="GO" id="GO:0003690">
    <property type="term" value="F:double-stranded DNA binding"/>
    <property type="evidence" value="ECO:0007669"/>
    <property type="project" value="UniProtKB-UniRule"/>
</dbReference>
<dbReference type="GO" id="GO:0000724">
    <property type="term" value="P:double-strand break repair via homologous recombination"/>
    <property type="evidence" value="ECO:0007669"/>
    <property type="project" value="UniProtKB-UniRule"/>
</dbReference>
<dbReference type="CDD" id="cd17932">
    <property type="entry name" value="DEXQc_UvrD"/>
    <property type="match status" value="1"/>
</dbReference>
<dbReference type="Gene3D" id="3.90.320.10">
    <property type="match status" value="1"/>
</dbReference>
<dbReference type="Gene3D" id="3.40.50.300">
    <property type="entry name" value="P-loop containing nucleotide triphosphate hydrolases"/>
    <property type="match status" value="4"/>
</dbReference>
<dbReference type="Gene3D" id="1.10.486.10">
    <property type="entry name" value="PCRA, domain 4"/>
    <property type="match status" value="1"/>
</dbReference>
<dbReference type="HAMAP" id="MF_01451">
    <property type="entry name" value="AddA"/>
    <property type="match status" value="1"/>
</dbReference>
<dbReference type="InterPro" id="IPR014152">
    <property type="entry name" value="AddA"/>
</dbReference>
<dbReference type="InterPro" id="IPR014017">
    <property type="entry name" value="DNA_helicase_UvrD-like_C"/>
</dbReference>
<dbReference type="InterPro" id="IPR000212">
    <property type="entry name" value="DNA_helicase_UvrD/REP"/>
</dbReference>
<dbReference type="InterPro" id="IPR027417">
    <property type="entry name" value="P-loop_NTPase"/>
</dbReference>
<dbReference type="InterPro" id="IPR011604">
    <property type="entry name" value="PDDEXK-like_dom_sf"/>
</dbReference>
<dbReference type="InterPro" id="IPR038726">
    <property type="entry name" value="PDDEXK_AddAB-type"/>
</dbReference>
<dbReference type="InterPro" id="IPR011335">
    <property type="entry name" value="Restrct_endonuc-II-like"/>
</dbReference>
<dbReference type="InterPro" id="IPR014016">
    <property type="entry name" value="UvrD-like_ATP-bd"/>
</dbReference>
<dbReference type="NCBIfam" id="TIGR02785">
    <property type="entry name" value="addA_Gpos"/>
    <property type="match status" value="1"/>
</dbReference>
<dbReference type="PANTHER" id="PTHR11070:SF48">
    <property type="entry name" value="ATP-DEPENDENT HELICASE_NUCLEASE SUBUNIT A"/>
    <property type="match status" value="1"/>
</dbReference>
<dbReference type="PANTHER" id="PTHR11070">
    <property type="entry name" value="UVRD / RECB / PCRA DNA HELICASE FAMILY MEMBER"/>
    <property type="match status" value="1"/>
</dbReference>
<dbReference type="Pfam" id="PF12705">
    <property type="entry name" value="PDDEXK_1"/>
    <property type="match status" value="1"/>
</dbReference>
<dbReference type="Pfam" id="PF00580">
    <property type="entry name" value="UvrD-helicase"/>
    <property type="match status" value="1"/>
</dbReference>
<dbReference type="Pfam" id="PF13361">
    <property type="entry name" value="UvrD_C"/>
    <property type="match status" value="1"/>
</dbReference>
<dbReference type="SUPFAM" id="SSF52540">
    <property type="entry name" value="P-loop containing nucleoside triphosphate hydrolases"/>
    <property type="match status" value="1"/>
</dbReference>
<dbReference type="SUPFAM" id="SSF52980">
    <property type="entry name" value="Restriction endonuclease-like"/>
    <property type="match status" value="1"/>
</dbReference>
<dbReference type="PROSITE" id="PS51198">
    <property type="entry name" value="UVRD_HELICASE_ATP_BIND"/>
    <property type="match status" value="1"/>
</dbReference>
<dbReference type="PROSITE" id="PS51217">
    <property type="entry name" value="UVRD_HELICASE_CTER"/>
    <property type="match status" value="1"/>
</dbReference>
<protein>
    <recommendedName>
        <fullName evidence="1">ATP-dependent helicase/nuclease subunit A</fullName>
        <ecNumber evidence="1">3.1.-.-</ecNumber>
        <ecNumber evidence="1">5.6.2.4</ecNumber>
    </recommendedName>
    <alternativeName>
        <fullName evidence="1">ATP-dependent helicase/nuclease AddA</fullName>
    </alternativeName>
    <alternativeName>
        <fullName evidence="1">DNA 3'-5' helicase AddA</fullName>
    </alternativeName>
</protein>
<proteinExistence type="inferred from homology"/>
<evidence type="ECO:0000255" key="1">
    <source>
        <dbReference type="HAMAP-Rule" id="MF_01451"/>
    </source>
</evidence>
<reference key="1">
    <citation type="journal article" date="2005" name="Proc. Natl. Acad. Sci. U.S.A.">
        <title>Genome analysis of multiple pathogenic isolates of Streptococcus agalactiae: implications for the microbial 'pan-genome'.</title>
        <authorList>
            <person name="Tettelin H."/>
            <person name="Masignani V."/>
            <person name="Cieslewicz M.J."/>
            <person name="Donati C."/>
            <person name="Medini D."/>
            <person name="Ward N.L."/>
            <person name="Angiuoli S.V."/>
            <person name="Crabtree J."/>
            <person name="Jones A.L."/>
            <person name="Durkin A.S."/>
            <person name="DeBoy R.T."/>
            <person name="Davidsen T.M."/>
            <person name="Mora M."/>
            <person name="Scarselli M."/>
            <person name="Margarit y Ros I."/>
            <person name="Peterson J.D."/>
            <person name="Hauser C.R."/>
            <person name="Sundaram J.P."/>
            <person name="Nelson W.C."/>
            <person name="Madupu R."/>
            <person name="Brinkac L.M."/>
            <person name="Dodson R.J."/>
            <person name="Rosovitz M.J."/>
            <person name="Sullivan S.A."/>
            <person name="Daugherty S.C."/>
            <person name="Haft D.H."/>
            <person name="Selengut J."/>
            <person name="Gwinn M.L."/>
            <person name="Zhou L."/>
            <person name="Zafar N."/>
            <person name="Khouri H."/>
            <person name="Radune D."/>
            <person name="Dimitrov G."/>
            <person name="Watkins K."/>
            <person name="O'Connor K.J."/>
            <person name="Smith S."/>
            <person name="Utterback T.R."/>
            <person name="White O."/>
            <person name="Rubens C.E."/>
            <person name="Grandi G."/>
            <person name="Madoff L.C."/>
            <person name="Kasper D.L."/>
            <person name="Telford J.L."/>
            <person name="Wessels M.R."/>
            <person name="Rappuoli R."/>
            <person name="Fraser C.M."/>
        </authorList>
    </citation>
    <scope>NUCLEOTIDE SEQUENCE [LARGE SCALE GENOMIC DNA]</scope>
    <source>
        <strain>ATCC 27591 / A909 / CDC SS700</strain>
    </source>
</reference>